<keyword id="KW-0165">Cleavage on pair of basic residues</keyword>
<keyword id="KW-1015">Disulfide bond</keyword>
<keyword id="KW-0378">Hydrolase</keyword>
<keyword id="KW-0479">Metal-binding</keyword>
<keyword id="KW-0482">Metalloprotease</keyword>
<keyword id="KW-0645">Protease</keyword>
<keyword id="KW-0964">Secreted</keyword>
<keyword id="KW-0732">Signal</keyword>
<keyword id="KW-0862">Zinc</keyword>
<keyword id="KW-0865">Zymogen</keyword>
<comment type="function">
    <text evidence="6">Metalloprotease.</text>
</comment>
<comment type="catalytic activity">
    <reaction evidence="6">
        <text>Hydrolysis of peptide bonds in substrates containing five or more amino acids, preferentially with Ala in P1', and Pro in P2'.</text>
        <dbReference type="EC" id="3.4.24.21"/>
    </reaction>
</comment>
<comment type="cofactor">
    <cofactor evidence="5">
        <name>Zn(2+)</name>
        <dbReference type="ChEBI" id="CHEBI:29105"/>
    </cofactor>
    <text evidence="5">Binds 1 zinc ion per subunit.</text>
</comment>
<comment type="activity regulation">
    <text evidence="6">Inhibited by ethylene glycol-bis(2-aminoethylether)-N,N,N,N-tetraacetic acid (EGTA), ethylenediaminetetraacetic acid (EDTA) and o-phenanthroline.</text>
</comment>
<comment type="biophysicochemical properties">
    <phDependence>
        <text evidence="6">Optimum pH is 7.5.</text>
    </phDependence>
    <temperatureDependence>
        <text evidence="6">Optimum temperature is 37 degrees Celsius.</text>
    </temperatureDependence>
</comment>
<comment type="subcellular location">
    <subcellularLocation>
        <location evidence="8">Secreted</location>
    </subcellularLocation>
</comment>
<comment type="developmental stage">
    <text evidence="6">Expressed in first, second and fourth juveniles. Not expressed in eggs and adults.</text>
</comment>
<comment type="induction">
    <text evidence="6">Induced upon parasitic infection of insects.</text>
</comment>
<accession>D2KBH9</accession>
<name>NAS8_STECR</name>
<proteinExistence type="evidence at protein level"/>
<sequence>MMNRASLCRIAVLLCILHLSHLIDSTYAQSYLTEKDFLAPLYDDDAITLSDDDFDNARKLSTEMVNSQKKRRVLSHQKYYRGDIRGRAAWTSKLKSGVRRNGVTSVIKRWPNGRIPYVISSQYNERERAVLARAFQEYHSRTCIRFVPRTSFDQDYLYIGKIDGCYSDVGRAGGRQELSLDDGCLQYNTAIHELMHSVGFYHEHERWDRDQYITILWNNIDKDAYDQFGRVDLTESSYYGQAYDYYSVMHYDSLAFSKNGFETLVAKRPEMTAVIGSAIDFSPIDLLKINKLYNCPAPNTIDISQISGNGWQGGGMGPRAPLPQVNLPLPPPPPLPTNPAIAIVGECSDRTNLCWRWLDRCRSYFFEKIMKEFCALSCGYCVPTNAVSKAAPAIPLQPTLSIAEGPEGPMPPLYQRFG</sequence>
<reference evidence="9" key="1">
    <citation type="journal article" date="2010" name="Mol. Biochem. Parasitol.">
        <title>Cloning, characterisation and heterologous expression of an astacin metalloprotease, Sc-AST, from the entomoparasitic nematode Steinernema carpocapsae.</title>
        <authorList>
            <person name="Jing Y."/>
            <person name="Toubarro D."/>
            <person name="Hao Y."/>
            <person name="Simoes N."/>
        </authorList>
    </citation>
    <scope>NUCLEOTIDE SEQUENCE [MRNA]</scope>
    <scope>FUNCTION</scope>
    <scope>CATALYTIC ACTIVITY</scope>
    <scope>ACTIVITY REGULATION</scope>
    <scope>BIOPHYSICOCHEMICAL PROPERTIES</scope>
    <scope>DEVELOPMENTAL STAGE</scope>
    <scope>INDUCTION</scope>
    <source>
        <strain evidence="9">Breton</strain>
    </source>
</reference>
<feature type="signal peptide" evidence="3">
    <location>
        <begin position="1"/>
        <end position="28"/>
    </location>
</feature>
<feature type="propeptide" id="PRO_0000442253" evidence="1">
    <location>
        <begin position="29"/>
        <end position="100"/>
    </location>
</feature>
<feature type="chain" id="PRO_5005126157" description="Zinc metalloproteinase nas-8" evidence="3">
    <location>
        <begin position="101"/>
        <end position="418"/>
    </location>
</feature>
<feature type="domain" description="Peptidase M12A" evidence="5">
    <location>
        <begin position="101"/>
        <end position="296"/>
    </location>
</feature>
<feature type="domain" description="ShKT" evidence="4">
    <location>
        <begin position="347"/>
        <end position="381"/>
    </location>
</feature>
<feature type="active site" evidence="5">
    <location>
        <position position="193"/>
    </location>
</feature>
<feature type="binding site" evidence="5">
    <location>
        <position position="192"/>
    </location>
    <ligand>
        <name>Zn(2+)</name>
        <dbReference type="ChEBI" id="CHEBI:29105"/>
        <note>catalytic</note>
    </ligand>
</feature>
<feature type="binding site" evidence="5">
    <location>
        <position position="196"/>
    </location>
    <ligand>
        <name>Zn(2+)</name>
        <dbReference type="ChEBI" id="CHEBI:29105"/>
        <note>catalytic</note>
    </ligand>
</feature>
<feature type="binding site" evidence="5">
    <location>
        <position position="202"/>
    </location>
    <ligand>
        <name>Zn(2+)</name>
        <dbReference type="ChEBI" id="CHEBI:29105"/>
        <note>catalytic</note>
    </ligand>
</feature>
<feature type="disulfide bond" evidence="5">
    <location>
        <begin position="143"/>
        <end position="295"/>
    </location>
</feature>
<feature type="disulfide bond" evidence="5">
    <location>
        <begin position="165"/>
        <end position="184"/>
    </location>
</feature>
<feature type="disulfide bond" evidence="4">
    <location>
        <begin position="347"/>
        <end position="381"/>
    </location>
</feature>
<feature type="disulfide bond" evidence="4">
    <location>
        <begin position="354"/>
        <end position="374"/>
    </location>
</feature>
<feature type="disulfide bond" evidence="4">
    <location>
        <begin position="361"/>
        <end position="378"/>
    </location>
</feature>
<evidence type="ECO:0000250" key="1">
    <source>
        <dbReference type="UniProtKB" id="P13497"/>
    </source>
</evidence>
<evidence type="ECO:0000250" key="2">
    <source>
        <dbReference type="UniProtKB" id="Q18439"/>
    </source>
</evidence>
<evidence type="ECO:0000255" key="3"/>
<evidence type="ECO:0000255" key="4">
    <source>
        <dbReference type="PROSITE-ProRule" id="PRU01005"/>
    </source>
</evidence>
<evidence type="ECO:0000255" key="5">
    <source>
        <dbReference type="PROSITE-ProRule" id="PRU01211"/>
    </source>
</evidence>
<evidence type="ECO:0000269" key="6">
    <source>
    </source>
</evidence>
<evidence type="ECO:0000303" key="7">
    <source>
    </source>
</evidence>
<evidence type="ECO:0000305" key="8"/>
<evidence type="ECO:0000312" key="9">
    <source>
        <dbReference type="EMBL" id="ACZ98149.1"/>
    </source>
</evidence>
<protein>
    <recommendedName>
        <fullName evidence="8">Zinc metalloproteinase nas-8</fullName>
        <ecNumber evidence="6">3.4.24.21</ecNumber>
    </recommendedName>
    <alternativeName>
        <fullName evidence="2">Nematode astacin 8</fullName>
    </alternativeName>
    <alternativeName>
        <fullName evidence="7">Sc-AST</fullName>
    </alternativeName>
</protein>
<dbReference type="EC" id="3.4.24.21" evidence="6"/>
<dbReference type="EMBL" id="GU199041">
    <property type="protein sequence ID" value="ACZ98149.1"/>
    <property type="molecule type" value="mRNA"/>
</dbReference>
<dbReference type="SMR" id="D2KBH9"/>
<dbReference type="MEROPS" id="M12.A21"/>
<dbReference type="BRENDA" id="3.4.24.21">
    <property type="organism ID" value="5892"/>
</dbReference>
<dbReference type="GO" id="GO:0005576">
    <property type="term" value="C:extracellular region"/>
    <property type="evidence" value="ECO:0007669"/>
    <property type="project" value="UniProtKB-SubCell"/>
</dbReference>
<dbReference type="GO" id="GO:0004222">
    <property type="term" value="F:metalloendopeptidase activity"/>
    <property type="evidence" value="ECO:0007669"/>
    <property type="project" value="UniProtKB-EC"/>
</dbReference>
<dbReference type="GO" id="GO:0008270">
    <property type="term" value="F:zinc ion binding"/>
    <property type="evidence" value="ECO:0007669"/>
    <property type="project" value="InterPro"/>
</dbReference>
<dbReference type="GO" id="GO:0006508">
    <property type="term" value="P:proteolysis"/>
    <property type="evidence" value="ECO:0007669"/>
    <property type="project" value="UniProtKB-KW"/>
</dbReference>
<dbReference type="CDD" id="cd04280">
    <property type="entry name" value="ZnMc_astacin_like"/>
    <property type="match status" value="1"/>
</dbReference>
<dbReference type="FunFam" id="3.40.390.10:FF:000045">
    <property type="entry name" value="Metalloendopeptidase"/>
    <property type="match status" value="1"/>
</dbReference>
<dbReference type="Gene3D" id="1.10.10.1940">
    <property type="match status" value="1"/>
</dbReference>
<dbReference type="Gene3D" id="3.40.390.10">
    <property type="entry name" value="Collagenase (Catalytic Domain)"/>
    <property type="match status" value="1"/>
</dbReference>
<dbReference type="InterPro" id="IPR034035">
    <property type="entry name" value="Astacin-like_dom"/>
</dbReference>
<dbReference type="InterPro" id="IPR024079">
    <property type="entry name" value="MetalloPept_cat_dom_sf"/>
</dbReference>
<dbReference type="InterPro" id="IPR001506">
    <property type="entry name" value="Peptidase_M12A"/>
</dbReference>
<dbReference type="InterPro" id="IPR006026">
    <property type="entry name" value="Peptidase_Metallo"/>
</dbReference>
<dbReference type="InterPro" id="IPR003582">
    <property type="entry name" value="ShKT_dom"/>
</dbReference>
<dbReference type="PANTHER" id="PTHR10127">
    <property type="entry name" value="DISCOIDIN, CUB, EGF, LAMININ , AND ZINC METALLOPROTEASE DOMAIN CONTAINING"/>
    <property type="match status" value="1"/>
</dbReference>
<dbReference type="PANTHER" id="PTHR10127:SF883">
    <property type="entry name" value="ZINC METALLOPROTEINASE NAS-8"/>
    <property type="match status" value="1"/>
</dbReference>
<dbReference type="Pfam" id="PF01400">
    <property type="entry name" value="Astacin"/>
    <property type="match status" value="1"/>
</dbReference>
<dbReference type="Pfam" id="PF01549">
    <property type="entry name" value="ShK"/>
    <property type="match status" value="1"/>
</dbReference>
<dbReference type="PRINTS" id="PR00480">
    <property type="entry name" value="ASTACIN"/>
</dbReference>
<dbReference type="SMART" id="SM00254">
    <property type="entry name" value="ShKT"/>
    <property type="match status" value="1"/>
</dbReference>
<dbReference type="SMART" id="SM00235">
    <property type="entry name" value="ZnMc"/>
    <property type="match status" value="1"/>
</dbReference>
<dbReference type="SUPFAM" id="SSF55486">
    <property type="entry name" value="Metalloproteases ('zincins'), catalytic domain"/>
    <property type="match status" value="1"/>
</dbReference>
<dbReference type="PROSITE" id="PS51864">
    <property type="entry name" value="ASTACIN"/>
    <property type="match status" value="1"/>
</dbReference>
<dbReference type="PROSITE" id="PS51670">
    <property type="entry name" value="SHKT"/>
    <property type="match status" value="1"/>
</dbReference>
<dbReference type="PROSITE" id="PS00142">
    <property type="entry name" value="ZINC_PROTEASE"/>
    <property type="match status" value="1"/>
</dbReference>
<organism evidence="9">
    <name type="scientific">Steinernema carpocapsae</name>
    <name type="common">Entomopathogenic nematode</name>
    <dbReference type="NCBI Taxonomy" id="34508"/>
    <lineage>
        <taxon>Eukaryota</taxon>
        <taxon>Metazoa</taxon>
        <taxon>Ecdysozoa</taxon>
        <taxon>Nematoda</taxon>
        <taxon>Chromadorea</taxon>
        <taxon>Rhabditida</taxon>
        <taxon>Tylenchina</taxon>
        <taxon>Panagrolaimomorpha</taxon>
        <taxon>Strongyloidoidea</taxon>
        <taxon>Steinernematidae</taxon>
        <taxon>Steinernema</taxon>
    </lineage>
</organism>